<evidence type="ECO:0000250" key="1">
    <source>
        <dbReference type="UniProtKB" id="P11166"/>
    </source>
</evidence>
<evidence type="ECO:0000250" key="2">
    <source>
        <dbReference type="UniProtKB" id="P11167"/>
    </source>
</evidence>
<evidence type="ECO:0000250" key="3">
    <source>
        <dbReference type="UniProtKB" id="P11169"/>
    </source>
</evidence>
<evidence type="ECO:0000250" key="4">
    <source>
        <dbReference type="UniProtKB" id="P17809"/>
    </source>
</evidence>
<evidence type="ECO:0000250" key="5">
    <source>
        <dbReference type="UniProtKB" id="P46896"/>
    </source>
</evidence>
<evidence type="ECO:0000255" key="6"/>
<evidence type="ECO:0000256" key="7">
    <source>
        <dbReference type="SAM" id="MobiDB-lite"/>
    </source>
</evidence>
<evidence type="ECO:0000305" key="8"/>
<accession>P13355</accession>
<comment type="function">
    <text evidence="1 4 5">Facilitative glucose transporter, which is responsible for constitutive or basal glucose uptake. Has a very broad substrate specificity; can transport a wide range of aldoses including both pentoses and hexoses. Most important energy carrier of the brain: present at the blood-brain barrier and assures the energy-independent, facilitative transport of glucose into the brain (By similarity). In association with BSG and NXNL1, promotes retinal cone survival by increasing glucose uptake into photoreceptors (By similarity). Required for mesendoderm differentiation (By similarity).</text>
</comment>
<comment type="catalytic activity">
    <reaction evidence="1">
        <text>D-glucose(out) = D-glucose(in)</text>
        <dbReference type="Rhea" id="RHEA:60376"/>
        <dbReference type="ChEBI" id="CHEBI:4167"/>
    </reaction>
</comment>
<comment type="activity regulation">
    <text evidence="1">The uptake of glucose is inhibited by cytochalasin B. Glucose uptake is increased in response to phorbol ester 12-O-tetradecanoylphorbol-13-acetate (TPA) treatment: TPA-induced glucose uptake requires phosphorylation at Ser-226.</text>
</comment>
<comment type="subunit">
    <text evidence="1 2 4">Found in a complex with ADD2, DMTN and SLC2A1. Interacts (via C-terminus cytoplasmic region) with DMTN. Interacts with SNX27; the interaction is required when endocytosed to prevent degradation in lysosomes and promote recycling to the plasma membrane. Interacts with GIPC (via PDZ domain). Interacts with STOM. Interacts with SGTA (via Gln-rich region) (By similarity). Interacts with BSG (By similarity). Interacts with SMIM43; the interaction may promote SLC2A1-mediated glucose transport to meet the energy needs of mesendoderm differentiation (By similarity).</text>
</comment>
<comment type="subcellular location">
    <subcellularLocation>
        <location evidence="1">Cell membrane</location>
        <topology evidence="6">Multi-pass membrane protein</topology>
    </subcellularLocation>
    <subcellularLocation>
        <location evidence="4">Photoreceptor inner segment</location>
    </subcellularLocation>
</comment>
<comment type="PTM">
    <text evidence="1">Phosphorylation at Ser-226 by PKC promotes glucose uptake by increasing cell membrane localization.</text>
</comment>
<comment type="similarity">
    <text evidence="8">Belongs to the major facilitator superfamily. Sugar transporter (TC 2.A.1.1) family. Glucose transporter subfamily.</text>
</comment>
<organism>
    <name type="scientific">Oryctolagus cuniculus</name>
    <name type="common">Rabbit</name>
    <dbReference type="NCBI Taxonomy" id="9986"/>
    <lineage>
        <taxon>Eukaryota</taxon>
        <taxon>Metazoa</taxon>
        <taxon>Chordata</taxon>
        <taxon>Craniata</taxon>
        <taxon>Vertebrata</taxon>
        <taxon>Euteleostomi</taxon>
        <taxon>Mammalia</taxon>
        <taxon>Eutheria</taxon>
        <taxon>Euarchontoglires</taxon>
        <taxon>Glires</taxon>
        <taxon>Lagomorpha</taxon>
        <taxon>Leporidae</taxon>
        <taxon>Oryctolagus</taxon>
    </lineage>
</organism>
<dbReference type="EMBL" id="M21747">
    <property type="protein sequence ID" value="AAA31444.1"/>
    <property type="molecule type" value="mRNA"/>
</dbReference>
<dbReference type="PIR" id="A30797">
    <property type="entry name" value="A30797"/>
</dbReference>
<dbReference type="RefSeq" id="NP_001099157.1">
    <property type="nucleotide sequence ID" value="NM_001105687.1"/>
</dbReference>
<dbReference type="SMR" id="P13355"/>
<dbReference type="FunCoup" id="P13355">
    <property type="interactions" value="165"/>
</dbReference>
<dbReference type="STRING" id="9986.ENSOCUP00000027075"/>
<dbReference type="GlyCosmos" id="P13355">
    <property type="glycosylation" value="1 site, No reported glycans"/>
</dbReference>
<dbReference type="PaxDb" id="9986-ENSOCUP00000005131"/>
<dbReference type="GeneID" id="100125988"/>
<dbReference type="KEGG" id="ocu:100125988"/>
<dbReference type="CTD" id="6513"/>
<dbReference type="eggNOG" id="KOG0569">
    <property type="taxonomic scope" value="Eukaryota"/>
</dbReference>
<dbReference type="InParanoid" id="P13355"/>
<dbReference type="OrthoDB" id="4540492at2759"/>
<dbReference type="Proteomes" id="UP000001811">
    <property type="component" value="Unplaced"/>
</dbReference>
<dbReference type="GO" id="GO:0016324">
    <property type="term" value="C:apical plasma membrane"/>
    <property type="evidence" value="ECO:0007669"/>
    <property type="project" value="TreeGrafter"/>
</dbReference>
<dbReference type="GO" id="GO:0016323">
    <property type="term" value="C:basolateral plasma membrane"/>
    <property type="evidence" value="ECO:0007669"/>
    <property type="project" value="TreeGrafter"/>
</dbReference>
<dbReference type="GO" id="GO:0030864">
    <property type="term" value="C:cortical actin cytoskeleton"/>
    <property type="evidence" value="ECO:0000250"/>
    <property type="project" value="UniProtKB"/>
</dbReference>
<dbReference type="GO" id="GO:0001917">
    <property type="term" value="C:photoreceptor inner segment"/>
    <property type="evidence" value="ECO:0007669"/>
    <property type="project" value="UniProtKB-SubCell"/>
</dbReference>
<dbReference type="GO" id="GO:0005886">
    <property type="term" value="C:plasma membrane"/>
    <property type="evidence" value="ECO:0000250"/>
    <property type="project" value="UniProtKB"/>
</dbReference>
<dbReference type="GO" id="GO:0055056">
    <property type="term" value="F:D-glucose transmembrane transporter activity"/>
    <property type="evidence" value="ECO:0000250"/>
    <property type="project" value="UniProtKB"/>
</dbReference>
<dbReference type="GO" id="GO:0046323">
    <property type="term" value="P:D-glucose import"/>
    <property type="evidence" value="ECO:0007669"/>
    <property type="project" value="TreeGrafter"/>
</dbReference>
<dbReference type="GO" id="GO:1904659">
    <property type="term" value="P:D-glucose transmembrane transport"/>
    <property type="evidence" value="ECO:0000250"/>
    <property type="project" value="UniProtKB"/>
</dbReference>
<dbReference type="GO" id="GO:0070837">
    <property type="term" value="P:dehydroascorbic acid transport"/>
    <property type="evidence" value="ECO:0007669"/>
    <property type="project" value="TreeGrafter"/>
</dbReference>
<dbReference type="GO" id="GO:0045494">
    <property type="term" value="P:photoreceptor cell maintenance"/>
    <property type="evidence" value="ECO:0000250"/>
    <property type="project" value="UniProtKB"/>
</dbReference>
<dbReference type="GO" id="GO:0065003">
    <property type="term" value="P:protein-containing complex assembly"/>
    <property type="evidence" value="ECO:0000250"/>
    <property type="project" value="UniProtKB"/>
</dbReference>
<dbReference type="GO" id="GO:0032868">
    <property type="term" value="P:response to insulin"/>
    <property type="evidence" value="ECO:0007669"/>
    <property type="project" value="TreeGrafter"/>
</dbReference>
<dbReference type="CDD" id="cd17431">
    <property type="entry name" value="MFS_GLUT_Class1"/>
    <property type="match status" value="1"/>
</dbReference>
<dbReference type="FunFam" id="1.20.1250.20:FF:000040">
    <property type="entry name" value="Solute carrier family 2, facilitated glucose transporter member 1"/>
    <property type="match status" value="1"/>
</dbReference>
<dbReference type="Gene3D" id="1.20.1250.20">
    <property type="entry name" value="MFS general substrate transporter like domains"/>
    <property type="match status" value="1"/>
</dbReference>
<dbReference type="InterPro" id="IPR002439">
    <property type="entry name" value="Glu_transpt_1"/>
</dbReference>
<dbReference type="InterPro" id="IPR045263">
    <property type="entry name" value="GLUT"/>
</dbReference>
<dbReference type="InterPro" id="IPR020846">
    <property type="entry name" value="MFS_dom"/>
</dbReference>
<dbReference type="InterPro" id="IPR005828">
    <property type="entry name" value="MFS_sugar_transport-like"/>
</dbReference>
<dbReference type="InterPro" id="IPR036259">
    <property type="entry name" value="MFS_trans_sf"/>
</dbReference>
<dbReference type="InterPro" id="IPR003663">
    <property type="entry name" value="Sugar/inositol_transpt"/>
</dbReference>
<dbReference type="InterPro" id="IPR005829">
    <property type="entry name" value="Sugar_transporter_CS"/>
</dbReference>
<dbReference type="NCBIfam" id="TIGR00879">
    <property type="entry name" value="SP"/>
    <property type="match status" value="1"/>
</dbReference>
<dbReference type="PANTHER" id="PTHR23503">
    <property type="entry name" value="SOLUTE CARRIER FAMILY 2"/>
    <property type="match status" value="1"/>
</dbReference>
<dbReference type="PANTHER" id="PTHR23503:SF51">
    <property type="entry name" value="SOLUTE CARRIER FAMILY 2, FACILITATED GLUCOSE TRANSPORTER MEMBER 1"/>
    <property type="match status" value="1"/>
</dbReference>
<dbReference type="Pfam" id="PF00083">
    <property type="entry name" value="Sugar_tr"/>
    <property type="match status" value="1"/>
</dbReference>
<dbReference type="PRINTS" id="PR01190">
    <property type="entry name" value="GLUCTRSPORT1"/>
</dbReference>
<dbReference type="PRINTS" id="PR00171">
    <property type="entry name" value="SUGRTRNSPORT"/>
</dbReference>
<dbReference type="SUPFAM" id="SSF103473">
    <property type="entry name" value="MFS general substrate transporter"/>
    <property type="match status" value="1"/>
</dbReference>
<dbReference type="PROSITE" id="PS50850">
    <property type="entry name" value="MFS"/>
    <property type="match status" value="1"/>
</dbReference>
<dbReference type="PROSITE" id="PS00216">
    <property type="entry name" value="SUGAR_TRANSPORT_1"/>
    <property type="match status" value="1"/>
</dbReference>
<dbReference type="PROSITE" id="PS00217">
    <property type="entry name" value="SUGAR_TRANSPORT_2"/>
    <property type="match status" value="1"/>
</dbReference>
<sequence>MEPSSKKVTGRLMLAVGGAVLGSLQFGYNTGVINAPQKVIEEFYNQTWIHRYGERILPTTLTTLWSLSVAIFSVGGMIGSFSVGLFVNRFGRRNSMLMMNLLAFVSAVLMGFSKLAKSFEMLILGRFIIGVYCGLTTGFVPMYVGEVSPTALRGALGTLHQLGIVVGILIAQVFGLDSIMGNEDLWPLLLSVIFVPALLQCIVLPLCPESPRFLLINRNEENRAKSVLKKLRGNADVTRDLQEMKEESRQMMREKKVTILELFRSPAYRQPILSAVVLQLSQQLSGINAVFYYSTSIFEKAGVQQPVYATIGSGIVNTAFTVVSLFVVERAGRRTLHLIGLAGMAACAVLMTIALALLEQLPWMSYLSIVAIFGFVAFFEVGPGPIPWFIVAELFSQGPRPAAVAVAGFSNWTSNFIVGMCFQYVEQLCGPYVFIIFTVLLVLFFIFTYFKVPETKGRTFDEIASGFRQGGASQSDKTPEELFHPLGADSQV</sequence>
<gene>
    <name evidence="1" type="primary">SLC2A1</name>
    <name evidence="1" type="synonym">GLUT1</name>
</gene>
<keyword id="KW-0007">Acetylation</keyword>
<keyword id="KW-1003">Cell membrane</keyword>
<keyword id="KW-0325">Glycoprotein</keyword>
<keyword id="KW-0472">Membrane</keyword>
<keyword id="KW-0597">Phosphoprotein</keyword>
<keyword id="KW-1185">Reference proteome</keyword>
<keyword id="KW-0762">Sugar transport</keyword>
<keyword id="KW-0812">Transmembrane</keyword>
<keyword id="KW-1133">Transmembrane helix</keyword>
<keyword id="KW-0813">Transport</keyword>
<proteinExistence type="evidence at transcript level"/>
<feature type="chain" id="PRO_0000050341" description="Solute carrier family 2, facilitated glucose transporter member 1">
    <location>
        <begin position="1"/>
        <end position="492"/>
    </location>
</feature>
<feature type="topological domain" description="Cytoplasmic" evidence="1">
    <location>
        <begin position="1"/>
        <end position="11"/>
    </location>
</feature>
<feature type="transmembrane region" description="Helical; Name=1" evidence="1">
    <location>
        <begin position="12"/>
        <end position="33"/>
    </location>
</feature>
<feature type="topological domain" description="Extracellular" evidence="1">
    <location>
        <begin position="34"/>
        <end position="66"/>
    </location>
</feature>
<feature type="transmembrane region" description="Helical; Name=2" evidence="1">
    <location>
        <begin position="67"/>
        <end position="87"/>
    </location>
</feature>
<feature type="topological domain" description="Cytoplasmic" evidence="1">
    <location>
        <begin position="88"/>
        <end position="90"/>
    </location>
</feature>
<feature type="transmembrane region" description="Helical; Name=3" evidence="1">
    <location>
        <begin position="91"/>
        <end position="112"/>
    </location>
</feature>
<feature type="topological domain" description="Extracellular" evidence="1">
    <location>
        <begin position="113"/>
        <end position="120"/>
    </location>
</feature>
<feature type="transmembrane region" description="Helical; Name=4" evidence="1">
    <location>
        <begin position="121"/>
        <end position="144"/>
    </location>
</feature>
<feature type="topological domain" description="Cytoplasmic" evidence="1">
    <location>
        <begin position="145"/>
        <end position="155"/>
    </location>
</feature>
<feature type="transmembrane region" description="Helical; Name=5" evidence="1">
    <location>
        <begin position="156"/>
        <end position="176"/>
    </location>
</feature>
<feature type="topological domain" description="Extracellular" evidence="1">
    <location>
        <begin position="177"/>
        <end position="185"/>
    </location>
</feature>
<feature type="transmembrane region" description="Helical; Name=6" evidence="1">
    <location>
        <begin position="186"/>
        <end position="206"/>
    </location>
</feature>
<feature type="topological domain" description="Cytoplasmic" evidence="1">
    <location>
        <begin position="207"/>
        <end position="271"/>
    </location>
</feature>
<feature type="transmembrane region" description="Helical; Name=7" evidence="1">
    <location>
        <begin position="272"/>
        <end position="293"/>
    </location>
</feature>
<feature type="topological domain" description="Extracellular" evidence="1">
    <location>
        <begin position="294"/>
        <end position="306"/>
    </location>
</feature>
<feature type="transmembrane region" description="Helical; Name=8" evidence="1">
    <location>
        <begin position="307"/>
        <end position="328"/>
    </location>
</feature>
<feature type="topological domain" description="Cytoplasmic" evidence="1">
    <location>
        <begin position="329"/>
        <end position="334"/>
    </location>
</feature>
<feature type="transmembrane region" description="Helical; Name=9" evidence="1">
    <location>
        <begin position="335"/>
        <end position="355"/>
    </location>
</feature>
<feature type="topological domain" description="Extracellular" evidence="1">
    <location>
        <begin position="356"/>
        <end position="365"/>
    </location>
</feature>
<feature type="transmembrane region" description="Helical; Name=10" evidence="1">
    <location>
        <begin position="366"/>
        <end position="388"/>
    </location>
</feature>
<feature type="topological domain" description="Cytoplasmic" evidence="1">
    <location>
        <begin position="389"/>
        <end position="401"/>
    </location>
</feature>
<feature type="transmembrane region" description="Helical; Name=11" evidence="1">
    <location>
        <begin position="402"/>
        <end position="422"/>
    </location>
</feature>
<feature type="topological domain" description="Extracellular" evidence="1">
    <location>
        <begin position="423"/>
        <end position="429"/>
    </location>
</feature>
<feature type="transmembrane region" description="Helical; Name=12" evidence="1">
    <location>
        <begin position="430"/>
        <end position="450"/>
    </location>
</feature>
<feature type="topological domain" description="Cytoplasmic" evidence="1">
    <location>
        <begin position="451"/>
        <end position="492"/>
    </location>
</feature>
<feature type="region of interest" description="Disordered" evidence="7">
    <location>
        <begin position="468"/>
        <end position="492"/>
    </location>
</feature>
<feature type="binding site" evidence="3">
    <location>
        <position position="161"/>
    </location>
    <ligand>
        <name>D-glucose</name>
        <dbReference type="ChEBI" id="CHEBI:4167"/>
    </ligand>
</feature>
<feature type="binding site" evidence="3">
    <location>
        <begin position="282"/>
        <end position="283"/>
    </location>
    <ligand>
        <name>D-glucose</name>
        <dbReference type="ChEBI" id="CHEBI:4167"/>
    </ligand>
</feature>
<feature type="binding site" evidence="3">
    <location>
        <position position="288"/>
    </location>
    <ligand>
        <name>D-glucose</name>
        <dbReference type="ChEBI" id="CHEBI:4167"/>
    </ligand>
</feature>
<feature type="binding site" evidence="3">
    <location>
        <position position="317"/>
    </location>
    <ligand>
        <name>D-glucose</name>
        <dbReference type="ChEBI" id="CHEBI:4167"/>
    </ligand>
</feature>
<feature type="binding site" evidence="3">
    <location>
        <position position="380"/>
    </location>
    <ligand>
        <name>D-glucose</name>
        <dbReference type="ChEBI" id="CHEBI:4167"/>
    </ligand>
</feature>
<feature type="binding site" evidence="3">
    <location>
        <position position="388"/>
    </location>
    <ligand>
        <name>D-glucose</name>
        <dbReference type="ChEBI" id="CHEBI:4167"/>
    </ligand>
</feature>
<feature type="modified residue" description="N-acetylmethionine" evidence="1">
    <location>
        <position position="1"/>
    </location>
</feature>
<feature type="modified residue" description="Phosphoserine" evidence="1">
    <location>
        <position position="226"/>
    </location>
</feature>
<feature type="modified residue" description="Phosphoserine" evidence="1">
    <location>
        <position position="465"/>
    </location>
</feature>
<feature type="modified residue" description="Phosphothreonine" evidence="1">
    <location>
        <position position="478"/>
    </location>
</feature>
<feature type="modified residue" description="Phosphoserine" evidence="1">
    <location>
        <position position="490"/>
    </location>
</feature>
<feature type="glycosylation site" description="N-linked (GlcNAc...) asparagine" evidence="6">
    <location>
        <position position="45"/>
    </location>
</feature>
<name>GTR1_RABIT</name>
<protein>
    <recommendedName>
        <fullName evidence="8">Solute carrier family 2, facilitated glucose transporter member 1</fullName>
    </recommendedName>
    <alternativeName>
        <fullName evidence="1">Glucose transporter type 1, erythrocyte/brain</fullName>
        <shortName evidence="1">GLUT-1</shortName>
    </alternativeName>
</protein>
<reference key="1">
    <citation type="journal article" date="1988" name="Biochem. Biophys. Res. Commun.">
        <title>Cloning of a rabbit brain glucose transporter cDNA and alteration of glucose transporter mRNA during tissue development.</title>
        <authorList>
            <person name="Asano T."/>
            <person name="Shibasaki Y."/>
            <person name="Kasuga M."/>
            <person name="Kanazawa Y."/>
            <person name="Takaku F."/>
            <person name="Akanuma Y."/>
            <person name="Oka Y."/>
        </authorList>
    </citation>
    <scope>NUCLEOTIDE SEQUENCE [MRNA]</scope>
    <source>
        <tissue>Brain</tissue>
    </source>
</reference>